<proteinExistence type="evidence at transcript level"/>
<accession>P76330</accession>
<accession>P94746</accession>
<keyword id="KW-0997">Cell inner membrane</keyword>
<keyword id="KW-1003">Cell membrane</keyword>
<keyword id="KW-0135">Cellulose biosynthesis</keyword>
<keyword id="KW-0342">GTP-binding</keyword>
<keyword id="KW-0460">Magnesium</keyword>
<keyword id="KW-0472">Membrane</keyword>
<keyword id="KW-0479">Metal-binding</keyword>
<keyword id="KW-0547">Nucleotide-binding</keyword>
<keyword id="KW-1185">Reference proteome</keyword>
<keyword id="KW-0808">Transferase</keyword>
<keyword id="KW-0812">Transmembrane</keyword>
<keyword id="KW-1133">Transmembrane helix</keyword>
<dbReference type="EC" id="2.7.7.65" evidence="1"/>
<dbReference type="EMBL" id="U00096">
    <property type="protein sequence ID" value="AAC75022.2"/>
    <property type="molecule type" value="Genomic_DNA"/>
</dbReference>
<dbReference type="EMBL" id="AP009048">
    <property type="protein sequence ID" value="BAA15784.1"/>
    <property type="molecule type" value="Genomic_DNA"/>
</dbReference>
<dbReference type="PIR" id="H64959">
    <property type="entry name" value="H64959"/>
</dbReference>
<dbReference type="RefSeq" id="NP_416465.2">
    <property type="nucleotide sequence ID" value="NC_000913.3"/>
</dbReference>
<dbReference type="RefSeq" id="WP_001350521.1">
    <property type="nucleotide sequence ID" value="NZ_LN832404.1"/>
</dbReference>
<dbReference type="SMR" id="P76330"/>
<dbReference type="BioGRID" id="4261052">
    <property type="interactions" value="3"/>
</dbReference>
<dbReference type="FunCoup" id="P76330">
    <property type="interactions" value="48"/>
</dbReference>
<dbReference type="STRING" id="511145.b1956"/>
<dbReference type="TCDB" id="9.B.34.1.4">
    <property type="family name" value="the kinase/phosphatase/cyclic-gmp synthase/cyclic di-gmp hydrolase (kpsh) family"/>
</dbReference>
<dbReference type="jPOST" id="P76330"/>
<dbReference type="PaxDb" id="511145-b1956"/>
<dbReference type="EnsemblBacteria" id="AAC75022">
    <property type="protein sequence ID" value="AAC75022"/>
    <property type="gene ID" value="b1956"/>
</dbReference>
<dbReference type="GeneID" id="946471"/>
<dbReference type="KEGG" id="ecj:JW5832"/>
<dbReference type="KEGG" id="eco:b1956"/>
<dbReference type="PATRIC" id="fig|1411691.4.peg.296"/>
<dbReference type="EchoBASE" id="EB3794"/>
<dbReference type="eggNOG" id="COG3706">
    <property type="taxonomic scope" value="Bacteria"/>
</dbReference>
<dbReference type="HOGENOM" id="CLU_000445_11_23_6"/>
<dbReference type="InParanoid" id="P76330"/>
<dbReference type="OMA" id="QFNIDRM"/>
<dbReference type="OrthoDB" id="9813903at2"/>
<dbReference type="PhylomeDB" id="P76330"/>
<dbReference type="BioCyc" id="EcoCyc:G7049-MONOMER"/>
<dbReference type="BioCyc" id="MetaCyc:G7049-MONOMER"/>
<dbReference type="UniPathway" id="UPA00599"/>
<dbReference type="UniPathway" id="UPA00694"/>
<dbReference type="PRO" id="PR:P76330"/>
<dbReference type="Proteomes" id="UP000000625">
    <property type="component" value="Chromosome"/>
</dbReference>
<dbReference type="GO" id="GO:0005886">
    <property type="term" value="C:plasma membrane"/>
    <property type="evidence" value="ECO:0000314"/>
    <property type="project" value="EcoCyc"/>
</dbReference>
<dbReference type="GO" id="GO:0052621">
    <property type="term" value="F:diguanylate cyclase activity"/>
    <property type="evidence" value="ECO:0000314"/>
    <property type="project" value="EcoCyc"/>
</dbReference>
<dbReference type="GO" id="GO:0005525">
    <property type="term" value="F:GTP binding"/>
    <property type="evidence" value="ECO:0007669"/>
    <property type="project" value="UniProtKB-KW"/>
</dbReference>
<dbReference type="GO" id="GO:0046872">
    <property type="term" value="F:metal ion binding"/>
    <property type="evidence" value="ECO:0007669"/>
    <property type="project" value="UniProtKB-KW"/>
</dbReference>
<dbReference type="GO" id="GO:0043709">
    <property type="term" value="P:cell adhesion involved in single-species biofilm formation"/>
    <property type="evidence" value="ECO:0000318"/>
    <property type="project" value="GO_Central"/>
</dbReference>
<dbReference type="GO" id="GO:0030244">
    <property type="term" value="P:cellulose biosynthetic process"/>
    <property type="evidence" value="ECO:0007669"/>
    <property type="project" value="UniProtKB-KW"/>
</dbReference>
<dbReference type="GO" id="GO:1902201">
    <property type="term" value="P:negative regulation of bacterial-type flagellum-dependent cell motility"/>
    <property type="evidence" value="ECO:0000315"/>
    <property type="project" value="EcoCyc"/>
</dbReference>
<dbReference type="CDD" id="cd01949">
    <property type="entry name" value="GGDEF"/>
    <property type="match status" value="1"/>
</dbReference>
<dbReference type="FunFam" id="3.30.70.270:FF:000001">
    <property type="entry name" value="Diguanylate cyclase domain protein"/>
    <property type="match status" value="1"/>
</dbReference>
<dbReference type="Gene3D" id="3.30.70.270">
    <property type="match status" value="1"/>
</dbReference>
<dbReference type="InterPro" id="IPR033416">
    <property type="entry name" value="CHASE7"/>
</dbReference>
<dbReference type="InterPro" id="IPR050469">
    <property type="entry name" value="Diguanylate_Cyclase"/>
</dbReference>
<dbReference type="InterPro" id="IPR000160">
    <property type="entry name" value="GGDEF_dom"/>
</dbReference>
<dbReference type="InterPro" id="IPR029787">
    <property type="entry name" value="Nucleotide_cyclase"/>
</dbReference>
<dbReference type="InterPro" id="IPR043128">
    <property type="entry name" value="Rev_trsase/Diguanyl_cyclase"/>
</dbReference>
<dbReference type="NCBIfam" id="TIGR00254">
    <property type="entry name" value="GGDEF"/>
    <property type="match status" value="1"/>
</dbReference>
<dbReference type="NCBIfam" id="NF011955">
    <property type="entry name" value="PRK15426.1"/>
    <property type="match status" value="1"/>
</dbReference>
<dbReference type="PANTHER" id="PTHR45138:SF16">
    <property type="entry name" value="DIGUANYLATE CYCLASE DGCQ-RELATED"/>
    <property type="match status" value="1"/>
</dbReference>
<dbReference type="PANTHER" id="PTHR45138">
    <property type="entry name" value="REGULATORY COMPONENTS OF SENSORY TRANSDUCTION SYSTEM"/>
    <property type="match status" value="1"/>
</dbReference>
<dbReference type="Pfam" id="PF17151">
    <property type="entry name" value="CHASE7"/>
    <property type="match status" value="1"/>
</dbReference>
<dbReference type="Pfam" id="PF00990">
    <property type="entry name" value="GGDEF"/>
    <property type="match status" value="1"/>
</dbReference>
<dbReference type="SMART" id="SM00267">
    <property type="entry name" value="GGDEF"/>
    <property type="match status" value="1"/>
</dbReference>
<dbReference type="SUPFAM" id="SSF55073">
    <property type="entry name" value="Nucleotide cyclase"/>
    <property type="match status" value="1"/>
</dbReference>
<dbReference type="PROSITE" id="PS50887">
    <property type="entry name" value="GGDEF"/>
    <property type="match status" value="1"/>
</dbReference>
<comment type="function">
    <text evidence="1 6">Catalyzes the synthesis of cyclic-di-GMP (c-di-GMP) via the condensation of 2 GTP molecules (By similarity). Cyclic-di-GMP is a second messenger which controls cell surface-associated traits in bacteria. Involved in the regulation of cellulose production (PubMed:20303158).</text>
</comment>
<comment type="catalytic activity">
    <reaction evidence="1">
        <text>2 GTP = 3',3'-c-di-GMP + 2 diphosphate</text>
        <dbReference type="Rhea" id="RHEA:24898"/>
        <dbReference type="ChEBI" id="CHEBI:33019"/>
        <dbReference type="ChEBI" id="CHEBI:37565"/>
        <dbReference type="ChEBI" id="CHEBI:58805"/>
        <dbReference type="EC" id="2.7.7.65"/>
    </reaction>
</comment>
<comment type="cofactor">
    <cofactor evidence="1">
        <name>Mg(2+)</name>
        <dbReference type="ChEBI" id="CHEBI:18420"/>
    </cofactor>
    <text evidence="1">Binds 1 Mg(2+) ion per monomer.</text>
</comment>
<comment type="pathway">
    <text evidence="9">Glycan metabolism; bacterial cellulose biosynthesis.</text>
</comment>
<comment type="pathway">
    <text evidence="9">Purine metabolism; 3',5'-cyclic di-GMP biosynthesis.</text>
</comment>
<comment type="subunit">
    <text evidence="1">Homodimer.</text>
</comment>
<comment type="subcellular location">
    <subcellularLocation>
        <location evidence="9">Cell inner membrane</location>
        <topology evidence="2">Multi-pass membrane protein</topology>
    </subcellularLocation>
</comment>
<comment type="induction">
    <text evidence="4 5">Constitutively expressed at both 28 and 37 degrees Celsius. Induced by 0.3 M NaCl. Expression is RpoS dependent.</text>
</comment>
<comment type="disruption phenotype">
    <text evidence="6 7">Deletion of the gene increases swimming motility and early biofilm formation (PubMed:21181144). Disruption partially suppresses the reduced motility of a pdeH disruption; concomitant disruption of dosC, dgcE, dgcQ and dgcN completely restores motility, suggesting these 4 genes, together with the c-di-GMP phosphodiesterase PdeH, form a network that regulates cell motility by altering levels of c-di-GMP (PubMed:20303158).</text>
</comment>
<sequence length="564" mass="64283">MQHETKMENQSWLKKLARRLGPGHVVNLCFIVVLLFSTLLTWREVVVLEDAYISSQRNHLENVANALDKHLQYNVDKLIFLRNGMREALVAPLDFTSLRDAVTEFEQHRDEHAWKIELNRRRTLPVNGVSDALVSEGNLLSRENESLDNEITAALEVGYLLRLAHNSSSMVEQAMYVSRAGFYVSTQPTLFTRNVPTRYYGYVTQPWFIGHSQRENRHRAVRWFTSQPEHASNTEPQVTVSVPVDSNNYWYGVLGMSIPVRTMQQFLRNAIDKNLDGEYQLYDSKLRFLTSSNPDHPTGNIFDPRELALLAQAMEHDTRGGIRMDSRYVSWERLDHFDGVLVRVHTLSEGVRGDFGSISIALTLLWALFTTMLLISWYVIRRMVSNMYVLQSSLQWQAWHDTLTRLYNRGALFEKARPLAKLCQTHQHPFSVIQVDLDHFKAINDRFGHQAGDRVLSHAAGLISSSLRAQDVAGRVGGEEFCVILPGASLTEAAEVAERIRLKLNEKEMLIAKSTTIRISASLGVSSSEETGDYDFEQLQSLADRRLYLAKQAGRNRVFASDNA</sequence>
<feature type="chain" id="PRO_0000169097" description="Probable diguanylate cyclase DgcQ">
    <location>
        <begin position="1"/>
        <end position="564"/>
    </location>
</feature>
<feature type="transmembrane region" description="Helical" evidence="2">
    <location>
        <begin position="20"/>
        <end position="40"/>
    </location>
</feature>
<feature type="transmembrane region" description="Helical" evidence="2">
    <location>
        <begin position="360"/>
        <end position="380"/>
    </location>
</feature>
<feature type="domain" description="GGDEF" evidence="3">
    <location>
        <begin position="428"/>
        <end position="563"/>
    </location>
</feature>
<feature type="active site" description="Proton acceptor" evidence="2">
    <location>
        <position position="479"/>
    </location>
</feature>
<feature type="binding site" evidence="1">
    <location>
        <position position="436"/>
    </location>
    <ligand>
        <name>Mg(2+)</name>
        <dbReference type="ChEBI" id="CHEBI:18420"/>
    </ligand>
</feature>
<feature type="binding site" evidence="1">
    <location>
        <position position="444"/>
    </location>
    <ligand>
        <name>substrate</name>
    </ligand>
</feature>
<feature type="binding site" evidence="1">
    <location>
        <position position="449"/>
    </location>
    <ligand>
        <name>substrate</name>
    </ligand>
</feature>
<feature type="binding site" evidence="1">
    <location>
        <position position="453"/>
    </location>
    <ligand>
        <name>substrate</name>
    </ligand>
</feature>
<feature type="binding site" evidence="1">
    <location>
        <position position="479"/>
    </location>
    <ligand>
        <name>Mg(2+)</name>
        <dbReference type="ChEBI" id="CHEBI:18420"/>
    </ligand>
</feature>
<feature type="site" description="Transition state stabilizer" evidence="2">
    <location>
        <position position="441"/>
    </location>
</feature>
<name>DGCQ_ECOLI</name>
<organism>
    <name type="scientific">Escherichia coli (strain K12)</name>
    <dbReference type="NCBI Taxonomy" id="83333"/>
    <lineage>
        <taxon>Bacteria</taxon>
        <taxon>Pseudomonadati</taxon>
        <taxon>Pseudomonadota</taxon>
        <taxon>Gammaproteobacteria</taxon>
        <taxon>Enterobacterales</taxon>
        <taxon>Enterobacteriaceae</taxon>
        <taxon>Escherichia</taxon>
    </lineage>
</organism>
<evidence type="ECO:0000250" key="1">
    <source>
        <dbReference type="UniProtKB" id="P31129"/>
    </source>
</evidence>
<evidence type="ECO:0000255" key="2"/>
<evidence type="ECO:0000255" key="3">
    <source>
        <dbReference type="PROSITE-ProRule" id="PRU00095"/>
    </source>
</evidence>
<evidence type="ECO:0000269" key="4">
    <source>
    </source>
</evidence>
<evidence type="ECO:0000269" key="5">
    <source>
    </source>
</evidence>
<evidence type="ECO:0000269" key="6">
    <source>
    </source>
</evidence>
<evidence type="ECO:0000269" key="7">
    <source>
    </source>
</evidence>
<evidence type="ECO:0000303" key="8">
    <source>
    </source>
</evidence>
<evidence type="ECO:0000305" key="9"/>
<protein>
    <recommendedName>
        <fullName evidence="9">Probable diguanylate cyclase DgcQ</fullName>
        <shortName evidence="9">DGC</shortName>
        <ecNumber evidence="1">2.7.7.65</ecNumber>
    </recommendedName>
    <alternativeName>
        <fullName>Cellulose synthesis regulatory protein</fullName>
    </alternativeName>
</protein>
<gene>
    <name evidence="8" type="primary">dgcQ</name>
    <name type="synonym">yedQ</name>
    <name type="ordered locus">b1956</name>
    <name type="ordered locus">JW5832</name>
</gene>
<reference key="1">
    <citation type="journal article" date="1996" name="DNA Res.">
        <title>A 460-kb DNA sequence of the Escherichia coli K-12 genome corresponding to the 40.1-50.0 min region on the linkage map.</title>
        <authorList>
            <person name="Itoh T."/>
            <person name="Aiba H."/>
            <person name="Baba T."/>
            <person name="Fujita K."/>
            <person name="Hayashi K."/>
            <person name="Inada T."/>
            <person name="Isono K."/>
            <person name="Kasai H."/>
            <person name="Kimura S."/>
            <person name="Kitakawa M."/>
            <person name="Kitagawa M."/>
            <person name="Makino K."/>
            <person name="Miki T."/>
            <person name="Mizobuchi K."/>
            <person name="Mori H."/>
            <person name="Mori T."/>
            <person name="Motomura K."/>
            <person name="Nakade S."/>
            <person name="Nakamura Y."/>
            <person name="Nashimoto H."/>
            <person name="Nishio Y."/>
            <person name="Oshima T."/>
            <person name="Saito N."/>
            <person name="Sampei G."/>
            <person name="Seki Y."/>
            <person name="Sivasundaram S."/>
            <person name="Tagami H."/>
            <person name="Takeda J."/>
            <person name="Takemoto K."/>
            <person name="Wada C."/>
            <person name="Yamamoto Y."/>
            <person name="Horiuchi T."/>
        </authorList>
    </citation>
    <scope>NUCLEOTIDE SEQUENCE [LARGE SCALE GENOMIC DNA]</scope>
    <source>
        <strain>K12 / W3110 / ATCC 27325 / DSM 5911</strain>
    </source>
</reference>
<reference key="2">
    <citation type="journal article" date="1997" name="Science">
        <title>The complete genome sequence of Escherichia coli K-12.</title>
        <authorList>
            <person name="Blattner F.R."/>
            <person name="Plunkett G. III"/>
            <person name="Bloch C.A."/>
            <person name="Perna N.T."/>
            <person name="Burland V."/>
            <person name="Riley M."/>
            <person name="Collado-Vides J."/>
            <person name="Glasner J.D."/>
            <person name="Rode C.K."/>
            <person name="Mayhew G.F."/>
            <person name="Gregor J."/>
            <person name="Davis N.W."/>
            <person name="Kirkpatrick H.A."/>
            <person name="Goeden M.A."/>
            <person name="Rose D.J."/>
            <person name="Mau B."/>
            <person name="Shao Y."/>
        </authorList>
    </citation>
    <scope>NUCLEOTIDE SEQUENCE [LARGE SCALE GENOMIC DNA]</scope>
    <source>
        <strain>K12 / MG1655 / ATCC 47076</strain>
    </source>
</reference>
<reference key="3">
    <citation type="journal article" date="2006" name="Mol. Syst. Biol.">
        <title>Highly accurate genome sequences of Escherichia coli K-12 strains MG1655 and W3110.</title>
        <authorList>
            <person name="Hayashi K."/>
            <person name="Morooka N."/>
            <person name="Yamamoto Y."/>
            <person name="Fujita K."/>
            <person name="Isono K."/>
            <person name="Choi S."/>
            <person name="Ohtsubo E."/>
            <person name="Baba T."/>
            <person name="Wanner B.L."/>
            <person name="Mori H."/>
            <person name="Horiuchi T."/>
        </authorList>
    </citation>
    <scope>NUCLEOTIDE SEQUENCE [LARGE SCALE GENOMIC DNA]</scope>
    <source>
        <strain>K12 / W3110 / ATCC 27325 / DSM 5911</strain>
    </source>
</reference>
<reference key="4">
    <citation type="journal article" date="2006" name="J. Bacteriol.">
        <title>A CsgD-independent pathway for cellulose production and biofilm formation in Escherichia coli.</title>
        <authorList>
            <person name="Da Re S."/>
            <person name="Ghigo J.-M."/>
        </authorList>
    </citation>
    <scope>REGULATION PATHWAY</scope>
    <source>
        <strain>1094</strain>
    </source>
</reference>
<reference key="5">
    <citation type="journal article" date="2006" name="Mol. Microbiol.">
        <title>Cyclic-di-GMP-mediated signalling within the sigma network of Escherichia coli.</title>
        <authorList>
            <person name="Weber H."/>
            <person name="Pesavento C."/>
            <person name="Possling A."/>
            <person name="Tischendorf G."/>
            <person name="Hengge R."/>
        </authorList>
    </citation>
    <scope>INDUCTION</scope>
    <scope>RPOS-DEPENDENCE</scope>
    <source>
        <strain>K12 / MC4100</strain>
    </source>
</reference>
<reference key="6">
    <citation type="journal article" date="2009" name="Microbiology">
        <title>Gene expression patterns and differential input into curli fimbriae regulation of all GGDEF/EAL domain proteins in Escherichia coli.</title>
        <authorList>
            <person name="Sommerfeldt N."/>
            <person name="Possling A."/>
            <person name="Becker G."/>
            <person name="Pesavento C."/>
            <person name="Tschowri N."/>
            <person name="Hengge R."/>
        </authorList>
    </citation>
    <scope>INDUCTION</scope>
    <scope>RPOS-DEPENDENCE</scope>
    <source>
        <strain>K12 / W3110 / ATCC 27325 / DSM 5911</strain>
    </source>
</reference>
<reference key="7">
    <citation type="journal article" date="2010" name="Cell">
        <title>Second messenger-mediated adjustment of bacterial swimming velocity.</title>
        <authorList>
            <person name="Boehm A."/>
            <person name="Kaiser M."/>
            <person name="Li H."/>
            <person name="Spangler C."/>
            <person name="Kasper C.A."/>
            <person name="Ackermann M."/>
            <person name="Kaever V."/>
            <person name="Sourjik V."/>
            <person name="Roth V."/>
            <person name="Jenal U."/>
        </authorList>
    </citation>
    <scope>ROLE IN MOTILITY</scope>
    <scope>DISRUPTION PHENOTYPE</scope>
    <source>
        <strain>K12 / MG1655 / ATCC 47076</strain>
    </source>
</reference>
<reference key="8">
    <citation type="journal article" date="2011" name="Appl. Microbiol. Biotechnol.">
        <title>GGDEF proteins YeaI, YedQ, and YfiN reduce early biofilm formation and swimming motility in Escherichia coli.</title>
        <authorList>
            <person name="Sanchez-Torres V."/>
            <person name="Hu H."/>
            <person name="Wood T.K."/>
        </authorList>
    </citation>
    <scope>DISRUPTION PHENOTYPE</scope>
</reference>
<reference key="9">
    <citation type="journal article" date="2015" name="J. Bacteriol.">
        <title>Systematic nomenclature for GGDEF and EAL domain-containing cyclic di-GMP turnover proteins of Escherichia coli.</title>
        <authorList>
            <person name="Hengge R."/>
            <person name="Galperin M.Y."/>
            <person name="Ghigo J.M."/>
            <person name="Gomelsky M."/>
            <person name="Green J."/>
            <person name="Hughes K.T."/>
            <person name="Jenal U."/>
            <person name="Landini P."/>
        </authorList>
    </citation>
    <scope>NOMENCLATURE</scope>
</reference>